<comment type="function">
    <text evidence="1 2">Component of the Mediator complex, a coactivator involved in the regulated transcription of nearly all RNA polymerase II-dependent genes. Mediator functions as a bridge to convey information from gene-specific regulatory proteins to the basal RNA polymerase II transcription machinery. Mediator is recruited to promoters by direct interactions with regulatory proteins and serves as a scaffold for the assembly of a functional preinitiation complex with RNA polymerase II and the general transcription factors (By similarity). Negatively regulates the Wnt signaling pathway and positively regulates the Nodal signaling pathway. Required for cardiac cushion formation.</text>
</comment>
<comment type="subunit">
    <text evidence="1">Component of the Mediator complex.</text>
</comment>
<comment type="subcellular location">
    <subcellularLocation>
        <location evidence="3">Nucleus</location>
    </subcellularLocation>
</comment>
<comment type="alternative products">
    <event type="alternative splicing"/>
    <isoform>
        <id>Q0VIA1-1</id>
        <name>1</name>
        <sequence type="displayed"/>
    </isoform>
    <isoform>
        <id>Q0VIA1-2</id>
        <name>2</name>
        <sequence type="described" ref="VSP_029613 VSP_029614"/>
    </isoform>
</comment>
<comment type="developmental stage">
    <text evidence="2">Expressed throughout embryogenesis.</text>
</comment>
<comment type="similarity">
    <text evidence="3">Belongs to the Mediator complex subunit 10 family.</text>
</comment>
<sequence length="134" mass="15438">MAEKFDNLEEHLEKFVENIRQLGIIVSDFQPSSQTGLNQKLNFMITGLQDIEKCRQQLHDINVPLEVFEYIDQGRNPQLYTKECLERALAKNEQVKGKIDTLTKFKSLLISELGKVFPEEMAKYKAIHGDDPPS</sequence>
<gene>
    <name type="primary">med10</name>
    <name type="synonym">ten</name>
    <name type="ORF">si:dkey-262j19.1</name>
    <name type="ORF">zgc:112222</name>
</gene>
<feature type="chain" id="PRO_0000303155" description="Mediator of RNA polymerase II transcription subunit 10">
    <location>
        <begin position="1"/>
        <end position="134"/>
    </location>
</feature>
<feature type="splice variant" id="VSP_029613" description="In isoform 2." evidence="3">
    <original>KFK</original>
    <variation>RMV</variation>
    <location>
        <begin position="104"/>
        <end position="106"/>
    </location>
</feature>
<feature type="splice variant" id="VSP_029614" description="In isoform 2." evidence="3">
    <location>
        <begin position="107"/>
        <end position="134"/>
    </location>
</feature>
<feature type="sequence conflict" description="In Ref. 2; AAH93274." evidence="3" ref="2">
    <original>M</original>
    <variation>V</variation>
    <location>
        <position position="44"/>
    </location>
</feature>
<dbReference type="EMBL" id="AY698065">
    <property type="protein sequence ID" value="AAW56465.1"/>
    <property type="molecule type" value="mRNA"/>
</dbReference>
<dbReference type="EMBL" id="CU013549">
    <property type="protein sequence ID" value="CAN88265.1"/>
    <property type="molecule type" value="Genomic_DNA"/>
</dbReference>
<dbReference type="EMBL" id="CU013549">
    <property type="protein sequence ID" value="CAN88266.1"/>
    <property type="molecule type" value="Genomic_DNA"/>
</dbReference>
<dbReference type="EMBL" id="BC093274">
    <property type="protein sequence ID" value="AAH93274.1"/>
    <property type="molecule type" value="mRNA"/>
</dbReference>
<dbReference type="RefSeq" id="NP_001017699.1">
    <property type="nucleotide sequence ID" value="NM_001017699.1"/>
</dbReference>
<dbReference type="SMR" id="Q0VIA1"/>
<dbReference type="FunCoup" id="Q0VIA1">
    <property type="interactions" value="1734"/>
</dbReference>
<dbReference type="STRING" id="7955.ENSDARP00000094663"/>
<dbReference type="PaxDb" id="7955-ENSDARP00000094663"/>
<dbReference type="Ensembl" id="ENSDART00000103887">
    <molecule id="Q0VIA1-1"/>
    <property type="protein sequence ID" value="ENSDARP00000094663"/>
    <property type="gene ID" value="ENSDARG00000070623"/>
</dbReference>
<dbReference type="GeneID" id="550394"/>
<dbReference type="KEGG" id="dre:550394"/>
<dbReference type="AGR" id="ZFIN:ZDB-GENE-070117-2423"/>
<dbReference type="CTD" id="84246"/>
<dbReference type="ZFIN" id="ZDB-GENE-070117-2423">
    <property type="gene designation" value="med10"/>
</dbReference>
<dbReference type="eggNOG" id="KOG3046">
    <property type="taxonomic scope" value="Eukaryota"/>
</dbReference>
<dbReference type="HOGENOM" id="CLU_096169_3_0_1"/>
<dbReference type="InParanoid" id="Q0VIA1"/>
<dbReference type="OMA" id="QYQRAKM"/>
<dbReference type="OrthoDB" id="337270at2759"/>
<dbReference type="PhylomeDB" id="Q0VIA1"/>
<dbReference type="TreeFam" id="TF315096"/>
<dbReference type="PRO" id="PR:Q0VIA1"/>
<dbReference type="Proteomes" id="UP000000437">
    <property type="component" value="Chromosome 19"/>
</dbReference>
<dbReference type="Bgee" id="ENSDARG00000070623">
    <property type="expression patterns" value="Expressed in early embryo and 27 other cell types or tissues"/>
</dbReference>
<dbReference type="GO" id="GO:0016592">
    <property type="term" value="C:mediator complex"/>
    <property type="evidence" value="ECO:0007669"/>
    <property type="project" value="InterPro"/>
</dbReference>
<dbReference type="GO" id="GO:0003712">
    <property type="term" value="F:transcription coregulator activity"/>
    <property type="evidence" value="ECO:0007669"/>
    <property type="project" value="InterPro"/>
</dbReference>
<dbReference type="GO" id="GO:0036302">
    <property type="term" value="P:atrioventricular canal development"/>
    <property type="evidence" value="ECO:0000315"/>
    <property type="project" value="ZFIN"/>
</dbReference>
<dbReference type="GO" id="GO:1905072">
    <property type="term" value="P:cardiac jelly development"/>
    <property type="evidence" value="ECO:0000315"/>
    <property type="project" value="ZFIN"/>
</dbReference>
<dbReference type="GO" id="GO:0007507">
    <property type="term" value="P:heart development"/>
    <property type="evidence" value="ECO:0000315"/>
    <property type="project" value="ZFIN"/>
</dbReference>
<dbReference type="GO" id="GO:0006357">
    <property type="term" value="P:regulation of transcription by RNA polymerase II"/>
    <property type="evidence" value="ECO:0007669"/>
    <property type="project" value="InterPro"/>
</dbReference>
<dbReference type="GO" id="GO:0016055">
    <property type="term" value="P:Wnt signaling pathway"/>
    <property type="evidence" value="ECO:0007669"/>
    <property type="project" value="UniProtKB-KW"/>
</dbReference>
<dbReference type="InterPro" id="IPR019145">
    <property type="entry name" value="Mediator_Med10"/>
</dbReference>
<dbReference type="PANTHER" id="PTHR13345">
    <property type="entry name" value="MEDIATOR OF RNA POLYMERASE II TRANSCRIPTION SUBUNIT 10"/>
    <property type="match status" value="1"/>
</dbReference>
<dbReference type="PANTHER" id="PTHR13345:SF13">
    <property type="entry name" value="MEDIATOR OF RNA POLYMERASE II TRANSCRIPTION SUBUNIT 10"/>
    <property type="match status" value="1"/>
</dbReference>
<dbReference type="Pfam" id="PF09748">
    <property type="entry name" value="Med10"/>
    <property type="match status" value="1"/>
</dbReference>
<evidence type="ECO:0000250" key="1"/>
<evidence type="ECO:0000269" key="2">
    <source>
    </source>
</evidence>
<evidence type="ECO:0000305" key="3"/>
<keyword id="KW-0010">Activator</keyword>
<keyword id="KW-0025">Alternative splicing</keyword>
<keyword id="KW-0217">Developmental protein</keyword>
<keyword id="KW-0539">Nucleus</keyword>
<keyword id="KW-1185">Reference proteome</keyword>
<keyword id="KW-0804">Transcription</keyword>
<keyword id="KW-0805">Transcription regulation</keyword>
<keyword id="KW-0879">Wnt signaling pathway</keyword>
<name>MED10_DANRE</name>
<organism>
    <name type="scientific">Danio rerio</name>
    <name type="common">Zebrafish</name>
    <name type="synonym">Brachydanio rerio</name>
    <dbReference type="NCBI Taxonomy" id="7955"/>
    <lineage>
        <taxon>Eukaryota</taxon>
        <taxon>Metazoa</taxon>
        <taxon>Chordata</taxon>
        <taxon>Craniata</taxon>
        <taxon>Vertebrata</taxon>
        <taxon>Euteleostomi</taxon>
        <taxon>Actinopterygii</taxon>
        <taxon>Neopterygii</taxon>
        <taxon>Teleostei</taxon>
        <taxon>Ostariophysi</taxon>
        <taxon>Cypriniformes</taxon>
        <taxon>Danionidae</taxon>
        <taxon>Danioninae</taxon>
        <taxon>Danio</taxon>
    </lineage>
</organism>
<proteinExistence type="evidence at transcript level"/>
<accession>Q0VIA1</accession>
<accession>A5WWF2</accession>
<accession>Q566Y7</accession>
<reference key="1">
    <citation type="journal article" date="2007" name="Dev. Biol.">
        <title>Depletion of Med10 enhances Wnt and suppresses Nodal signaling during zebrafish embryogenesis.</title>
        <authorList>
            <person name="Lin X."/>
            <person name="Rinaldo L."/>
            <person name="Fazly A.F."/>
            <person name="Xu X."/>
        </authorList>
    </citation>
    <scope>NUCLEOTIDE SEQUENCE [MRNA] (ISOFORM 1)</scope>
    <scope>FUNCTION</scope>
    <scope>DEVELOPMENTAL STAGE</scope>
</reference>
<reference key="2">
    <citation type="journal article" date="2013" name="Nature">
        <title>The zebrafish reference genome sequence and its relationship to the human genome.</title>
        <authorList>
            <person name="Howe K."/>
            <person name="Clark M.D."/>
            <person name="Torroja C.F."/>
            <person name="Torrance J."/>
            <person name="Berthelot C."/>
            <person name="Muffato M."/>
            <person name="Collins J.E."/>
            <person name="Humphray S."/>
            <person name="McLaren K."/>
            <person name="Matthews L."/>
            <person name="McLaren S."/>
            <person name="Sealy I."/>
            <person name="Caccamo M."/>
            <person name="Churcher C."/>
            <person name="Scott C."/>
            <person name="Barrett J.C."/>
            <person name="Koch R."/>
            <person name="Rauch G.J."/>
            <person name="White S."/>
            <person name="Chow W."/>
            <person name="Kilian B."/>
            <person name="Quintais L.T."/>
            <person name="Guerra-Assuncao J.A."/>
            <person name="Zhou Y."/>
            <person name="Gu Y."/>
            <person name="Yen J."/>
            <person name="Vogel J.H."/>
            <person name="Eyre T."/>
            <person name="Redmond S."/>
            <person name="Banerjee R."/>
            <person name="Chi J."/>
            <person name="Fu B."/>
            <person name="Langley E."/>
            <person name="Maguire S.F."/>
            <person name="Laird G.K."/>
            <person name="Lloyd D."/>
            <person name="Kenyon E."/>
            <person name="Donaldson S."/>
            <person name="Sehra H."/>
            <person name="Almeida-King J."/>
            <person name="Loveland J."/>
            <person name="Trevanion S."/>
            <person name="Jones M."/>
            <person name="Quail M."/>
            <person name="Willey D."/>
            <person name="Hunt A."/>
            <person name="Burton J."/>
            <person name="Sims S."/>
            <person name="McLay K."/>
            <person name="Plumb B."/>
            <person name="Davis J."/>
            <person name="Clee C."/>
            <person name="Oliver K."/>
            <person name="Clark R."/>
            <person name="Riddle C."/>
            <person name="Elliot D."/>
            <person name="Threadgold G."/>
            <person name="Harden G."/>
            <person name="Ware D."/>
            <person name="Begum S."/>
            <person name="Mortimore B."/>
            <person name="Kerry G."/>
            <person name="Heath P."/>
            <person name="Phillimore B."/>
            <person name="Tracey A."/>
            <person name="Corby N."/>
            <person name="Dunn M."/>
            <person name="Johnson C."/>
            <person name="Wood J."/>
            <person name="Clark S."/>
            <person name="Pelan S."/>
            <person name="Griffiths G."/>
            <person name="Smith M."/>
            <person name="Glithero R."/>
            <person name="Howden P."/>
            <person name="Barker N."/>
            <person name="Lloyd C."/>
            <person name="Stevens C."/>
            <person name="Harley J."/>
            <person name="Holt K."/>
            <person name="Panagiotidis G."/>
            <person name="Lovell J."/>
            <person name="Beasley H."/>
            <person name="Henderson C."/>
            <person name="Gordon D."/>
            <person name="Auger K."/>
            <person name="Wright D."/>
            <person name="Collins J."/>
            <person name="Raisen C."/>
            <person name="Dyer L."/>
            <person name="Leung K."/>
            <person name="Robertson L."/>
            <person name="Ambridge K."/>
            <person name="Leongamornlert D."/>
            <person name="McGuire S."/>
            <person name="Gilderthorp R."/>
            <person name="Griffiths C."/>
            <person name="Manthravadi D."/>
            <person name="Nichol S."/>
            <person name="Barker G."/>
            <person name="Whitehead S."/>
            <person name="Kay M."/>
            <person name="Brown J."/>
            <person name="Murnane C."/>
            <person name="Gray E."/>
            <person name="Humphries M."/>
            <person name="Sycamore N."/>
            <person name="Barker D."/>
            <person name="Saunders D."/>
            <person name="Wallis J."/>
            <person name="Babbage A."/>
            <person name="Hammond S."/>
            <person name="Mashreghi-Mohammadi M."/>
            <person name="Barr L."/>
            <person name="Martin S."/>
            <person name="Wray P."/>
            <person name="Ellington A."/>
            <person name="Matthews N."/>
            <person name="Ellwood M."/>
            <person name="Woodmansey R."/>
            <person name="Clark G."/>
            <person name="Cooper J."/>
            <person name="Tromans A."/>
            <person name="Grafham D."/>
            <person name="Skuce C."/>
            <person name="Pandian R."/>
            <person name="Andrews R."/>
            <person name="Harrison E."/>
            <person name="Kimberley A."/>
            <person name="Garnett J."/>
            <person name="Fosker N."/>
            <person name="Hall R."/>
            <person name="Garner P."/>
            <person name="Kelly D."/>
            <person name="Bird C."/>
            <person name="Palmer S."/>
            <person name="Gehring I."/>
            <person name="Berger A."/>
            <person name="Dooley C.M."/>
            <person name="Ersan-Urun Z."/>
            <person name="Eser C."/>
            <person name="Geiger H."/>
            <person name="Geisler M."/>
            <person name="Karotki L."/>
            <person name="Kirn A."/>
            <person name="Konantz J."/>
            <person name="Konantz M."/>
            <person name="Oberlander M."/>
            <person name="Rudolph-Geiger S."/>
            <person name="Teucke M."/>
            <person name="Lanz C."/>
            <person name="Raddatz G."/>
            <person name="Osoegawa K."/>
            <person name="Zhu B."/>
            <person name="Rapp A."/>
            <person name="Widaa S."/>
            <person name="Langford C."/>
            <person name="Yang F."/>
            <person name="Schuster S.C."/>
            <person name="Carter N.P."/>
            <person name="Harrow J."/>
            <person name="Ning Z."/>
            <person name="Herrero J."/>
            <person name="Searle S.M."/>
            <person name="Enright A."/>
            <person name="Geisler R."/>
            <person name="Plasterk R.H."/>
            <person name="Lee C."/>
            <person name="Westerfield M."/>
            <person name="de Jong P.J."/>
            <person name="Zon L.I."/>
            <person name="Postlethwait J.H."/>
            <person name="Nusslein-Volhard C."/>
            <person name="Hubbard T.J."/>
            <person name="Roest Crollius H."/>
            <person name="Rogers J."/>
            <person name="Stemple D.L."/>
        </authorList>
    </citation>
    <scope>NUCLEOTIDE SEQUENCE [LARGE SCALE GENOMIC DNA]</scope>
    <source>
        <strain>Tuebingen</strain>
    </source>
</reference>
<reference key="3">
    <citation type="submission" date="2005-04" db="EMBL/GenBank/DDBJ databases">
        <authorList>
            <consortium name="NIH - Zebrafish Gene Collection (ZGC) project"/>
        </authorList>
    </citation>
    <scope>NUCLEOTIDE SEQUENCE [LARGE SCALE MRNA] (ISOFORM 1)</scope>
    <source>
        <tissue>Larva</tissue>
    </source>
</reference>
<protein>
    <recommendedName>
        <fullName>Mediator of RNA polymerase II transcription subunit 10</fullName>
    </recommendedName>
    <alternativeName>
        <fullName>Mediator complex subunit 10</fullName>
    </alternativeName>
    <alternativeName>
        <fullName>Protein tennis match</fullName>
    </alternativeName>
</protein>